<protein>
    <recommendedName>
        <fullName evidence="1">ATP-dependent Clp protease proteolytic subunit 3</fullName>
        <ecNumber evidence="1">3.4.21.92</ecNumber>
    </recommendedName>
    <alternativeName>
        <fullName evidence="1">Endopeptidase Clp 3</fullName>
    </alternativeName>
</protein>
<proteinExistence type="inferred from homology"/>
<keyword id="KW-0963">Cytoplasm</keyword>
<keyword id="KW-0378">Hydrolase</keyword>
<keyword id="KW-0645">Protease</keyword>
<keyword id="KW-1185">Reference proteome</keyword>
<keyword id="KW-0720">Serine protease</keyword>
<organism>
    <name type="scientific">Prochlorococcus marinus (strain MIT 9313)</name>
    <dbReference type="NCBI Taxonomy" id="74547"/>
    <lineage>
        <taxon>Bacteria</taxon>
        <taxon>Bacillati</taxon>
        <taxon>Cyanobacteriota</taxon>
        <taxon>Cyanophyceae</taxon>
        <taxon>Synechococcales</taxon>
        <taxon>Prochlorococcaceae</taxon>
        <taxon>Prochlorococcus</taxon>
    </lineage>
</organism>
<dbReference type="EC" id="3.4.21.92" evidence="1"/>
<dbReference type="EMBL" id="BX548175">
    <property type="protein sequence ID" value="CAE20851.1"/>
    <property type="molecule type" value="Genomic_DNA"/>
</dbReference>
<dbReference type="SMR" id="Q7V7R2"/>
<dbReference type="MEROPS" id="S14.001"/>
<dbReference type="KEGG" id="pmt:PMT_0676"/>
<dbReference type="eggNOG" id="COG0740">
    <property type="taxonomic scope" value="Bacteria"/>
</dbReference>
<dbReference type="HOGENOM" id="CLU_058707_3_2_3"/>
<dbReference type="Proteomes" id="UP000001423">
    <property type="component" value="Chromosome"/>
</dbReference>
<dbReference type="GO" id="GO:0005737">
    <property type="term" value="C:cytoplasm"/>
    <property type="evidence" value="ECO:0007669"/>
    <property type="project" value="UniProtKB-SubCell"/>
</dbReference>
<dbReference type="GO" id="GO:0009368">
    <property type="term" value="C:endopeptidase Clp complex"/>
    <property type="evidence" value="ECO:0007669"/>
    <property type="project" value="TreeGrafter"/>
</dbReference>
<dbReference type="GO" id="GO:0004176">
    <property type="term" value="F:ATP-dependent peptidase activity"/>
    <property type="evidence" value="ECO:0007669"/>
    <property type="project" value="InterPro"/>
</dbReference>
<dbReference type="GO" id="GO:0051117">
    <property type="term" value="F:ATPase binding"/>
    <property type="evidence" value="ECO:0007669"/>
    <property type="project" value="TreeGrafter"/>
</dbReference>
<dbReference type="GO" id="GO:0004252">
    <property type="term" value="F:serine-type endopeptidase activity"/>
    <property type="evidence" value="ECO:0007669"/>
    <property type="project" value="UniProtKB-UniRule"/>
</dbReference>
<dbReference type="GO" id="GO:0006515">
    <property type="term" value="P:protein quality control for misfolded or incompletely synthesized proteins"/>
    <property type="evidence" value="ECO:0007669"/>
    <property type="project" value="TreeGrafter"/>
</dbReference>
<dbReference type="CDD" id="cd07017">
    <property type="entry name" value="S14_ClpP_2"/>
    <property type="match status" value="1"/>
</dbReference>
<dbReference type="FunFam" id="3.90.226.10:FF:000001">
    <property type="entry name" value="ATP-dependent Clp protease proteolytic subunit"/>
    <property type="match status" value="1"/>
</dbReference>
<dbReference type="Gene3D" id="3.90.226.10">
    <property type="entry name" value="2-enoyl-CoA Hydratase, Chain A, domain 1"/>
    <property type="match status" value="1"/>
</dbReference>
<dbReference type="HAMAP" id="MF_00444">
    <property type="entry name" value="ClpP"/>
    <property type="match status" value="1"/>
</dbReference>
<dbReference type="InterPro" id="IPR001907">
    <property type="entry name" value="ClpP"/>
</dbReference>
<dbReference type="InterPro" id="IPR029045">
    <property type="entry name" value="ClpP/crotonase-like_dom_sf"/>
</dbReference>
<dbReference type="InterPro" id="IPR023562">
    <property type="entry name" value="ClpP/TepA"/>
</dbReference>
<dbReference type="InterPro" id="IPR018215">
    <property type="entry name" value="ClpP_Ser_AS"/>
</dbReference>
<dbReference type="NCBIfam" id="TIGR00493">
    <property type="entry name" value="clpP"/>
    <property type="match status" value="1"/>
</dbReference>
<dbReference type="NCBIfam" id="NF001368">
    <property type="entry name" value="PRK00277.1"/>
    <property type="match status" value="1"/>
</dbReference>
<dbReference type="NCBIfam" id="NF009203">
    <property type="entry name" value="PRK12551.1"/>
    <property type="match status" value="1"/>
</dbReference>
<dbReference type="NCBIfam" id="NF009205">
    <property type="entry name" value="PRK12553.1"/>
    <property type="match status" value="1"/>
</dbReference>
<dbReference type="PANTHER" id="PTHR10381">
    <property type="entry name" value="ATP-DEPENDENT CLP PROTEASE PROTEOLYTIC SUBUNIT"/>
    <property type="match status" value="1"/>
</dbReference>
<dbReference type="PANTHER" id="PTHR10381:SF70">
    <property type="entry name" value="ATP-DEPENDENT CLP PROTEASE PROTEOLYTIC SUBUNIT"/>
    <property type="match status" value="1"/>
</dbReference>
<dbReference type="Pfam" id="PF00574">
    <property type="entry name" value="CLP_protease"/>
    <property type="match status" value="1"/>
</dbReference>
<dbReference type="PRINTS" id="PR00127">
    <property type="entry name" value="CLPPROTEASEP"/>
</dbReference>
<dbReference type="SUPFAM" id="SSF52096">
    <property type="entry name" value="ClpP/crotonase"/>
    <property type="match status" value="1"/>
</dbReference>
<dbReference type="PROSITE" id="PS00381">
    <property type="entry name" value="CLP_PROTEASE_SER"/>
    <property type="match status" value="1"/>
</dbReference>
<comment type="function">
    <text evidence="1">Cleaves peptides in various proteins in a process that requires ATP hydrolysis. Has a chymotrypsin-like activity. Plays a major role in the degradation of misfolded proteins.</text>
</comment>
<comment type="catalytic activity">
    <reaction evidence="1">
        <text>Hydrolysis of proteins to small peptides in the presence of ATP and magnesium. alpha-casein is the usual test substrate. In the absence of ATP, only oligopeptides shorter than five residues are hydrolyzed (such as succinyl-Leu-Tyr-|-NHMec, and Leu-Tyr-Leu-|-Tyr-Trp, in which cleavage of the -Tyr-|-Leu- and -Tyr-|-Trp bonds also occurs).</text>
        <dbReference type="EC" id="3.4.21.92"/>
    </reaction>
</comment>
<comment type="subunit">
    <text evidence="1">Fourteen ClpP subunits assemble into 2 heptameric rings which stack back to back to give a disk-like structure with a central cavity, resembling the structure of eukaryotic proteasomes.</text>
</comment>
<comment type="subcellular location">
    <subcellularLocation>
        <location evidence="1">Cytoplasm</location>
    </subcellularLocation>
</comment>
<comment type="similarity">
    <text evidence="1">Belongs to the peptidase S14 family.</text>
</comment>
<reference key="1">
    <citation type="journal article" date="2003" name="Nature">
        <title>Genome divergence in two Prochlorococcus ecotypes reflects oceanic niche differentiation.</title>
        <authorList>
            <person name="Rocap G."/>
            <person name="Larimer F.W."/>
            <person name="Lamerdin J.E."/>
            <person name="Malfatti S."/>
            <person name="Chain P."/>
            <person name="Ahlgren N.A."/>
            <person name="Arellano A."/>
            <person name="Coleman M."/>
            <person name="Hauser L."/>
            <person name="Hess W.R."/>
            <person name="Johnson Z.I."/>
            <person name="Land M.L."/>
            <person name="Lindell D."/>
            <person name="Post A.F."/>
            <person name="Regala W."/>
            <person name="Shah M."/>
            <person name="Shaw S.L."/>
            <person name="Steglich C."/>
            <person name="Sullivan M.B."/>
            <person name="Ting C.S."/>
            <person name="Tolonen A."/>
            <person name="Webb E.A."/>
            <person name="Zinser E.R."/>
            <person name="Chisholm S.W."/>
        </authorList>
    </citation>
    <scope>NUCLEOTIDE SEQUENCE [LARGE SCALE GENOMIC DNA]</scope>
    <source>
        <strain>MIT 9313</strain>
    </source>
</reference>
<name>CLPP3_PROMM</name>
<evidence type="ECO:0000255" key="1">
    <source>
        <dbReference type="HAMAP-Rule" id="MF_00444"/>
    </source>
</evidence>
<accession>Q7V7R2</accession>
<gene>
    <name evidence="1" type="primary">clpP3</name>
    <name type="ordered locus">PMT_0676</name>
</gene>
<sequence length="197" mass="21808">MIPIVIEESGRGERAFDIYSRLLRERIIFLGEPVTSDSANRIVAQMLFLEAEDPEKDIYLYINSPGGSVYDGLGIFDTMQHVKPDVQTVCVGLAASMGAFLLCAGAMGKRSSLQHSRIMIHQPLGGARGQASDIRIQADEILFLKDRLNRVLADRTGQPLERIQEDTDRDFFMSPAEAVGYGLVDSVIDKRPVHSVN</sequence>
<feature type="chain" id="PRO_0000179622" description="ATP-dependent Clp protease proteolytic subunit 3">
    <location>
        <begin position="1"/>
        <end position="197"/>
    </location>
</feature>
<feature type="active site" description="Nucleophile" evidence="1">
    <location>
        <position position="96"/>
    </location>
</feature>
<feature type="active site" evidence="1">
    <location>
        <position position="121"/>
    </location>
</feature>